<name>HISX_RALN1</name>
<reference key="1">
    <citation type="journal article" date="2002" name="Nature">
        <title>Genome sequence of the plant pathogen Ralstonia solanacearum.</title>
        <authorList>
            <person name="Salanoubat M."/>
            <person name="Genin S."/>
            <person name="Artiguenave F."/>
            <person name="Gouzy J."/>
            <person name="Mangenot S."/>
            <person name="Arlat M."/>
            <person name="Billault A."/>
            <person name="Brottier P."/>
            <person name="Camus J.-C."/>
            <person name="Cattolico L."/>
            <person name="Chandler M."/>
            <person name="Choisne N."/>
            <person name="Claudel-Renard C."/>
            <person name="Cunnac S."/>
            <person name="Demange N."/>
            <person name="Gaspin C."/>
            <person name="Lavie M."/>
            <person name="Moisan A."/>
            <person name="Robert C."/>
            <person name="Saurin W."/>
            <person name="Schiex T."/>
            <person name="Siguier P."/>
            <person name="Thebault P."/>
            <person name="Whalen M."/>
            <person name="Wincker P."/>
            <person name="Levy M."/>
            <person name="Weissenbach J."/>
            <person name="Boucher C.A."/>
        </authorList>
    </citation>
    <scope>NUCLEOTIDE SEQUENCE [LARGE SCALE GENOMIC DNA]</scope>
    <source>
        <strain>ATCC BAA-1114 / GMI1000</strain>
    </source>
</reference>
<comment type="function">
    <text evidence="1">Catalyzes the sequential NAD-dependent oxidations of L-histidinol to L-histidinaldehyde and then to L-histidine.</text>
</comment>
<comment type="catalytic activity">
    <reaction evidence="1">
        <text>L-histidinol + 2 NAD(+) + H2O = L-histidine + 2 NADH + 3 H(+)</text>
        <dbReference type="Rhea" id="RHEA:20641"/>
        <dbReference type="ChEBI" id="CHEBI:15377"/>
        <dbReference type="ChEBI" id="CHEBI:15378"/>
        <dbReference type="ChEBI" id="CHEBI:57540"/>
        <dbReference type="ChEBI" id="CHEBI:57595"/>
        <dbReference type="ChEBI" id="CHEBI:57699"/>
        <dbReference type="ChEBI" id="CHEBI:57945"/>
        <dbReference type="EC" id="1.1.1.23"/>
    </reaction>
</comment>
<comment type="cofactor">
    <cofactor evidence="1">
        <name>Zn(2+)</name>
        <dbReference type="ChEBI" id="CHEBI:29105"/>
    </cofactor>
    <text evidence="1">Binds 1 zinc ion per subunit.</text>
</comment>
<comment type="pathway">
    <text evidence="1">Amino-acid biosynthesis; L-histidine biosynthesis; L-histidine from 5-phospho-alpha-D-ribose 1-diphosphate: step 9/9.</text>
</comment>
<comment type="similarity">
    <text evidence="1">Belongs to the histidinol dehydrogenase family.</text>
</comment>
<gene>
    <name evidence="1" type="primary">hisD</name>
    <name type="ordered locus">RSc2952</name>
    <name type="ORF">RS00134</name>
</gene>
<proteinExistence type="inferred from homology"/>
<keyword id="KW-0028">Amino-acid biosynthesis</keyword>
<keyword id="KW-0368">Histidine biosynthesis</keyword>
<keyword id="KW-0479">Metal-binding</keyword>
<keyword id="KW-0520">NAD</keyword>
<keyword id="KW-0560">Oxidoreductase</keyword>
<keyword id="KW-1185">Reference proteome</keyword>
<keyword id="KW-0862">Zinc</keyword>
<accession>Q8XV79</accession>
<sequence length="442" mass="47038">MSLTLRKLDSADAGFAAQLRQVLAFEASEDEAIDRAAAQILADVKVRGDAAVLETTLRFDRVEADSVAALELSPVVLQAALDGLEPTRRAALEAAAARVRAYHEKQKIECGTHSWEYAEADGTVLGQKVTPLDRVGIYVPGGKAAYPSSVLMNAIPARVAGVKEIIMVVPTPGGVRNELVLAAACIAGVDRVFTIGGAQAVGALAYGTETVPAVDKIVGPGNAYVAAAKRRVFGTVGIDMIAGPSEILVICDGTTDPDWVAMDLFSQAEHDELAQSILLCPDAGFIAQVEASIRRQLDDMPRKEVIAASLSGRGALIQVRDMDEACEIANDIAPEHLEISAENPRQWAERIRHAGAIFLGKYTSESLGDYCAGPNHVLPTSRTARFSSPLGVYDFIKRSSLIEVSEAGAQMLGEIASELAYGEGLQAHARSAEYRLQRTTTE</sequence>
<dbReference type="EC" id="1.1.1.23" evidence="1"/>
<dbReference type="EMBL" id="AL646052">
    <property type="protein sequence ID" value="CAD16659.1"/>
    <property type="molecule type" value="Genomic_DNA"/>
</dbReference>
<dbReference type="RefSeq" id="WP_011002857.1">
    <property type="nucleotide sequence ID" value="NC_003295.1"/>
</dbReference>
<dbReference type="SMR" id="Q8XV79"/>
<dbReference type="STRING" id="267608.RSc2952"/>
<dbReference type="EnsemblBacteria" id="CAD16659">
    <property type="protein sequence ID" value="CAD16659"/>
    <property type="gene ID" value="RSc2952"/>
</dbReference>
<dbReference type="KEGG" id="rso:RSc2952"/>
<dbReference type="eggNOG" id="COG0141">
    <property type="taxonomic scope" value="Bacteria"/>
</dbReference>
<dbReference type="HOGENOM" id="CLU_006732_3_3_4"/>
<dbReference type="UniPathway" id="UPA00031">
    <property type="reaction ID" value="UER00014"/>
</dbReference>
<dbReference type="Proteomes" id="UP000001436">
    <property type="component" value="Chromosome"/>
</dbReference>
<dbReference type="GO" id="GO:0005829">
    <property type="term" value="C:cytosol"/>
    <property type="evidence" value="ECO:0007669"/>
    <property type="project" value="TreeGrafter"/>
</dbReference>
<dbReference type="GO" id="GO:0004399">
    <property type="term" value="F:histidinol dehydrogenase activity"/>
    <property type="evidence" value="ECO:0007669"/>
    <property type="project" value="UniProtKB-UniRule"/>
</dbReference>
<dbReference type="GO" id="GO:0051287">
    <property type="term" value="F:NAD binding"/>
    <property type="evidence" value="ECO:0007669"/>
    <property type="project" value="InterPro"/>
</dbReference>
<dbReference type="GO" id="GO:0008270">
    <property type="term" value="F:zinc ion binding"/>
    <property type="evidence" value="ECO:0007669"/>
    <property type="project" value="UniProtKB-UniRule"/>
</dbReference>
<dbReference type="GO" id="GO:0000105">
    <property type="term" value="P:L-histidine biosynthetic process"/>
    <property type="evidence" value="ECO:0007669"/>
    <property type="project" value="UniProtKB-UniRule"/>
</dbReference>
<dbReference type="CDD" id="cd06572">
    <property type="entry name" value="Histidinol_dh"/>
    <property type="match status" value="1"/>
</dbReference>
<dbReference type="FunFam" id="3.40.50.1980:FF:000001">
    <property type="entry name" value="Histidinol dehydrogenase"/>
    <property type="match status" value="1"/>
</dbReference>
<dbReference type="FunFam" id="3.40.50.1980:FF:000026">
    <property type="entry name" value="Histidinol dehydrogenase"/>
    <property type="match status" value="1"/>
</dbReference>
<dbReference type="Gene3D" id="1.20.5.1300">
    <property type="match status" value="1"/>
</dbReference>
<dbReference type="Gene3D" id="3.40.50.1980">
    <property type="entry name" value="Nitrogenase molybdenum iron protein domain"/>
    <property type="match status" value="2"/>
</dbReference>
<dbReference type="HAMAP" id="MF_01024">
    <property type="entry name" value="HisD"/>
    <property type="match status" value="1"/>
</dbReference>
<dbReference type="InterPro" id="IPR016161">
    <property type="entry name" value="Ald_DH/histidinol_DH"/>
</dbReference>
<dbReference type="InterPro" id="IPR001692">
    <property type="entry name" value="Histidinol_DH_CS"/>
</dbReference>
<dbReference type="InterPro" id="IPR022695">
    <property type="entry name" value="Histidinol_DH_monofunct"/>
</dbReference>
<dbReference type="InterPro" id="IPR012131">
    <property type="entry name" value="Hstdl_DH"/>
</dbReference>
<dbReference type="NCBIfam" id="TIGR00069">
    <property type="entry name" value="hisD"/>
    <property type="match status" value="1"/>
</dbReference>
<dbReference type="PANTHER" id="PTHR21256:SF2">
    <property type="entry name" value="HISTIDINE BIOSYNTHESIS TRIFUNCTIONAL PROTEIN"/>
    <property type="match status" value="1"/>
</dbReference>
<dbReference type="PANTHER" id="PTHR21256">
    <property type="entry name" value="HISTIDINOL DEHYDROGENASE HDH"/>
    <property type="match status" value="1"/>
</dbReference>
<dbReference type="Pfam" id="PF00815">
    <property type="entry name" value="Histidinol_dh"/>
    <property type="match status" value="1"/>
</dbReference>
<dbReference type="PIRSF" id="PIRSF000099">
    <property type="entry name" value="Histidinol_dh"/>
    <property type="match status" value="1"/>
</dbReference>
<dbReference type="PRINTS" id="PR00083">
    <property type="entry name" value="HOLDHDRGNASE"/>
</dbReference>
<dbReference type="SUPFAM" id="SSF53720">
    <property type="entry name" value="ALDH-like"/>
    <property type="match status" value="1"/>
</dbReference>
<dbReference type="PROSITE" id="PS00611">
    <property type="entry name" value="HISOL_DEHYDROGENASE"/>
    <property type="match status" value="1"/>
</dbReference>
<evidence type="ECO:0000255" key="1">
    <source>
        <dbReference type="HAMAP-Rule" id="MF_01024"/>
    </source>
</evidence>
<protein>
    <recommendedName>
        <fullName evidence="1">Histidinol dehydrogenase</fullName>
        <shortName evidence="1">HDH</shortName>
        <ecNumber evidence="1">1.1.1.23</ecNumber>
    </recommendedName>
</protein>
<feature type="chain" id="PRO_0000135828" description="Histidinol dehydrogenase">
    <location>
        <begin position="1"/>
        <end position="442"/>
    </location>
</feature>
<feature type="active site" description="Proton acceptor" evidence="1">
    <location>
        <position position="335"/>
    </location>
</feature>
<feature type="active site" description="Proton acceptor" evidence="1">
    <location>
        <position position="336"/>
    </location>
</feature>
<feature type="binding site" evidence="1">
    <location>
        <position position="138"/>
    </location>
    <ligand>
        <name>NAD(+)</name>
        <dbReference type="ChEBI" id="CHEBI:57540"/>
    </ligand>
</feature>
<feature type="binding site" evidence="1">
    <location>
        <position position="199"/>
    </location>
    <ligand>
        <name>NAD(+)</name>
        <dbReference type="ChEBI" id="CHEBI:57540"/>
    </ligand>
</feature>
<feature type="binding site" evidence="1">
    <location>
        <position position="222"/>
    </location>
    <ligand>
        <name>NAD(+)</name>
        <dbReference type="ChEBI" id="CHEBI:57540"/>
    </ligand>
</feature>
<feature type="binding site" evidence="1">
    <location>
        <position position="245"/>
    </location>
    <ligand>
        <name>substrate</name>
    </ligand>
</feature>
<feature type="binding site" evidence="1">
    <location>
        <position position="267"/>
    </location>
    <ligand>
        <name>substrate</name>
    </ligand>
</feature>
<feature type="binding site" evidence="1">
    <location>
        <position position="267"/>
    </location>
    <ligand>
        <name>Zn(2+)</name>
        <dbReference type="ChEBI" id="CHEBI:29105"/>
    </ligand>
</feature>
<feature type="binding site" evidence="1">
    <location>
        <position position="270"/>
    </location>
    <ligand>
        <name>substrate</name>
    </ligand>
</feature>
<feature type="binding site" evidence="1">
    <location>
        <position position="270"/>
    </location>
    <ligand>
        <name>Zn(2+)</name>
        <dbReference type="ChEBI" id="CHEBI:29105"/>
    </ligand>
</feature>
<feature type="binding site" evidence="1">
    <location>
        <position position="336"/>
    </location>
    <ligand>
        <name>substrate</name>
    </ligand>
</feature>
<feature type="binding site" evidence="1">
    <location>
        <position position="369"/>
    </location>
    <ligand>
        <name>substrate</name>
    </ligand>
</feature>
<feature type="binding site" evidence="1">
    <location>
        <position position="369"/>
    </location>
    <ligand>
        <name>Zn(2+)</name>
        <dbReference type="ChEBI" id="CHEBI:29105"/>
    </ligand>
</feature>
<feature type="binding site" evidence="1">
    <location>
        <position position="423"/>
    </location>
    <ligand>
        <name>substrate</name>
    </ligand>
</feature>
<feature type="binding site" evidence="1">
    <location>
        <position position="428"/>
    </location>
    <ligand>
        <name>substrate</name>
    </ligand>
</feature>
<feature type="binding site" evidence="1">
    <location>
        <position position="428"/>
    </location>
    <ligand>
        <name>Zn(2+)</name>
        <dbReference type="ChEBI" id="CHEBI:29105"/>
    </ligand>
</feature>
<organism>
    <name type="scientific">Ralstonia nicotianae (strain ATCC BAA-1114 / GMI1000)</name>
    <name type="common">Ralstonia solanacearum</name>
    <dbReference type="NCBI Taxonomy" id="267608"/>
    <lineage>
        <taxon>Bacteria</taxon>
        <taxon>Pseudomonadati</taxon>
        <taxon>Pseudomonadota</taxon>
        <taxon>Betaproteobacteria</taxon>
        <taxon>Burkholderiales</taxon>
        <taxon>Burkholderiaceae</taxon>
        <taxon>Ralstonia</taxon>
        <taxon>Ralstonia solanacearum species complex</taxon>
    </lineage>
</organism>